<reference key="1">
    <citation type="journal article" date="2008" name="BMC Genomics">
        <title>Comparative genomic analysis of the gut bacterium Bifidobacterium longum reveals loci susceptible to deletion during pure culture growth.</title>
        <authorList>
            <person name="Lee J.H."/>
            <person name="Karamychev V.N."/>
            <person name="Kozyavkin S.A."/>
            <person name="Mills D."/>
            <person name="Pavlov A.R."/>
            <person name="Pavlova N.V."/>
            <person name="Polouchine N.N."/>
            <person name="Richardson P.M."/>
            <person name="Shakhova V.V."/>
            <person name="Slesarev A.I."/>
            <person name="Weimer B."/>
            <person name="O'Sullivan D.J."/>
        </authorList>
    </citation>
    <scope>NUCLEOTIDE SEQUENCE [LARGE SCALE GENOMIC DNA]</scope>
    <source>
        <strain>DJO10A</strain>
    </source>
</reference>
<sequence length="521" mass="56462">MSDTEDLAALNDRLMAKNHALAEALSRAGKELTKAKSQLAQLAQPPLTFATMVKVDSTRTDEDGIQHASAEVISGTRRMVVPVASNVNAARLTAGATVMLNEKLVLVEQRDADTVGQIRSVKQVLDDGRLIVTDASGNPVLIRRSGALAYAGINQGDRIIIDPSVRLAIEALPAEGDKDLVLEETPDVTFADIGGLDSEIGRIRDAVQLPFQHRALFERYDLKPPKGVLLYGPPGNGKTMIAKAVANALCEGGYDSNGDGAISPAETHVKGVFLSVKGPELLNKYVGESERLIRLIFQRARERAADGNPVVVFIDEMDSLLRTRGSGVSSDVETTIVPQFLSELDGVESLDNVMVIGASNRVDMIDPAVLRPGRLDVKIRVGRPKTNQAIAIVDHYLTDDLPLEDGVDAHALSAVLVHDIYGTSERRHLCDVQEENGQWHALFLADVVSGAMLKNIVDRAKTRAVKESIETGLDVALTVPLLAAAVEDEYRETRDSMADVDPEQWSRINGMDPIRRIRTAE</sequence>
<evidence type="ECO:0000255" key="1">
    <source>
        <dbReference type="HAMAP-Rule" id="MF_02112"/>
    </source>
</evidence>
<gene>
    <name evidence="1" type="primary">arc</name>
    <name type="ordered locus">BLD_1971</name>
</gene>
<name>ARC_BIFLD</name>
<accession>B3DRN4</accession>
<protein>
    <recommendedName>
        <fullName evidence="1">AAA ATPase forming ring-shaped complexes</fullName>
        <shortName evidence="1">ARC</shortName>
    </recommendedName>
</protein>
<dbReference type="EMBL" id="CP000605">
    <property type="protein sequence ID" value="ACD99416.1"/>
    <property type="molecule type" value="Genomic_DNA"/>
</dbReference>
<dbReference type="SMR" id="B3DRN4"/>
<dbReference type="KEGG" id="blj:BLD_1971"/>
<dbReference type="HOGENOM" id="CLU_036054_0_0_11"/>
<dbReference type="Proteomes" id="UP000002419">
    <property type="component" value="Chromosome"/>
</dbReference>
<dbReference type="GO" id="GO:0000502">
    <property type="term" value="C:proteasome complex"/>
    <property type="evidence" value="ECO:0007669"/>
    <property type="project" value="InterPro"/>
</dbReference>
<dbReference type="GO" id="GO:0005524">
    <property type="term" value="F:ATP binding"/>
    <property type="evidence" value="ECO:0007669"/>
    <property type="project" value="UniProtKB-UniRule"/>
</dbReference>
<dbReference type="GO" id="GO:0016887">
    <property type="term" value="F:ATP hydrolysis activity"/>
    <property type="evidence" value="ECO:0007669"/>
    <property type="project" value="UniProtKB-UniRule"/>
</dbReference>
<dbReference type="GO" id="GO:0019941">
    <property type="term" value="P:modification-dependent protein catabolic process"/>
    <property type="evidence" value="ECO:0007669"/>
    <property type="project" value="InterPro"/>
</dbReference>
<dbReference type="GO" id="GO:0010498">
    <property type="term" value="P:proteasomal protein catabolic process"/>
    <property type="evidence" value="ECO:0007669"/>
    <property type="project" value="InterPro"/>
</dbReference>
<dbReference type="FunFam" id="3.40.50.300:FF:001025">
    <property type="entry name" value="ATPase family, AAA domain-containing 2B"/>
    <property type="match status" value="1"/>
</dbReference>
<dbReference type="Gene3D" id="1.10.8.60">
    <property type="match status" value="1"/>
</dbReference>
<dbReference type="Gene3D" id="2.40.50.140">
    <property type="entry name" value="Nucleic acid-binding proteins"/>
    <property type="match status" value="2"/>
</dbReference>
<dbReference type="Gene3D" id="3.40.50.300">
    <property type="entry name" value="P-loop containing nucleotide triphosphate hydrolases"/>
    <property type="match status" value="1"/>
</dbReference>
<dbReference type="HAMAP" id="MF_02112">
    <property type="entry name" value="ARC_ATPase"/>
    <property type="match status" value="1"/>
</dbReference>
<dbReference type="InterPro" id="IPR003593">
    <property type="entry name" value="AAA+_ATPase"/>
</dbReference>
<dbReference type="InterPro" id="IPR050168">
    <property type="entry name" value="AAA_ATPase_domain"/>
</dbReference>
<dbReference type="InterPro" id="IPR003959">
    <property type="entry name" value="ATPase_AAA_core"/>
</dbReference>
<dbReference type="InterPro" id="IPR003960">
    <property type="entry name" value="ATPase_AAA_CS"/>
</dbReference>
<dbReference type="InterPro" id="IPR012340">
    <property type="entry name" value="NA-bd_OB-fold"/>
</dbReference>
<dbReference type="InterPro" id="IPR027417">
    <property type="entry name" value="P-loop_NTPase"/>
</dbReference>
<dbReference type="InterPro" id="IPR032501">
    <property type="entry name" value="Prot_ATP_ID_OB_2nd"/>
</dbReference>
<dbReference type="InterPro" id="IPR041626">
    <property type="entry name" value="Prot_ATP_ID_OB_N"/>
</dbReference>
<dbReference type="InterPro" id="IPR022482">
    <property type="entry name" value="Proteasome_ATPase"/>
</dbReference>
<dbReference type="NCBIfam" id="TIGR03689">
    <property type="entry name" value="pup_AAA"/>
    <property type="match status" value="1"/>
</dbReference>
<dbReference type="PANTHER" id="PTHR23077">
    <property type="entry name" value="AAA-FAMILY ATPASE"/>
    <property type="match status" value="1"/>
</dbReference>
<dbReference type="PANTHER" id="PTHR23077:SF144">
    <property type="entry name" value="PROTEASOME-ASSOCIATED ATPASE"/>
    <property type="match status" value="1"/>
</dbReference>
<dbReference type="Pfam" id="PF00004">
    <property type="entry name" value="AAA"/>
    <property type="match status" value="1"/>
</dbReference>
<dbReference type="Pfam" id="PF16450">
    <property type="entry name" value="Prot_ATP_ID_OB_C"/>
    <property type="match status" value="1"/>
</dbReference>
<dbReference type="Pfam" id="PF17758">
    <property type="entry name" value="Prot_ATP_ID_OB_N"/>
    <property type="match status" value="1"/>
</dbReference>
<dbReference type="SMART" id="SM00382">
    <property type="entry name" value="AAA"/>
    <property type="match status" value="1"/>
</dbReference>
<dbReference type="SUPFAM" id="SSF52540">
    <property type="entry name" value="P-loop containing nucleoside triphosphate hydrolases"/>
    <property type="match status" value="1"/>
</dbReference>
<dbReference type="PROSITE" id="PS00674">
    <property type="entry name" value="AAA"/>
    <property type="match status" value="1"/>
</dbReference>
<comment type="subunit">
    <text evidence="1">Homohexamer. Assembles into a hexameric ring structure.</text>
</comment>
<comment type="similarity">
    <text evidence="1">Belongs to the AAA ATPase family.</text>
</comment>
<organism>
    <name type="scientific">Bifidobacterium longum (strain DJO10A)</name>
    <dbReference type="NCBI Taxonomy" id="205913"/>
    <lineage>
        <taxon>Bacteria</taxon>
        <taxon>Bacillati</taxon>
        <taxon>Actinomycetota</taxon>
        <taxon>Actinomycetes</taxon>
        <taxon>Bifidobacteriales</taxon>
        <taxon>Bifidobacteriaceae</taxon>
        <taxon>Bifidobacterium</taxon>
    </lineage>
</organism>
<keyword id="KW-0067">ATP-binding</keyword>
<keyword id="KW-0175">Coiled coil</keyword>
<keyword id="KW-0547">Nucleotide-binding</keyword>
<proteinExistence type="inferred from homology"/>
<feature type="chain" id="PRO_0000396970" description="AAA ATPase forming ring-shaped complexes">
    <location>
        <begin position="1"/>
        <end position="521"/>
    </location>
</feature>
<feature type="coiled-coil region" evidence="1">
    <location>
        <begin position="4"/>
        <end position="44"/>
    </location>
</feature>
<feature type="binding site" evidence="1">
    <location>
        <begin position="235"/>
        <end position="240"/>
    </location>
    <ligand>
        <name>ATP</name>
        <dbReference type="ChEBI" id="CHEBI:30616"/>
    </ligand>
</feature>